<dbReference type="EMBL" id="CR456471">
    <property type="protein sequence ID" value="CAG30357.1"/>
    <property type="molecule type" value="mRNA"/>
</dbReference>
<dbReference type="EMBL" id="AK127583">
    <property type="protein sequence ID" value="BAC87043.1"/>
    <property type="molecule type" value="mRNA"/>
</dbReference>
<dbReference type="EMBL" id="Z97630">
    <property type="status" value="NOT_ANNOTATED_CDS"/>
    <property type="molecule type" value="Genomic_DNA"/>
</dbReference>
<dbReference type="EMBL" id="BC014641">
    <property type="protein sequence ID" value="AAH14641.1"/>
    <property type="molecule type" value="mRNA"/>
</dbReference>
<dbReference type="EMBL" id="BC066909">
    <property type="protein sequence ID" value="AAH66909.1"/>
    <property type="molecule type" value="mRNA"/>
</dbReference>
<dbReference type="CCDS" id="CCDS13959.1">
    <molecule id="Q6NXT1-1"/>
</dbReference>
<dbReference type="RefSeq" id="NP_620152.1">
    <molecule id="Q6NXT1-1"/>
    <property type="nucleotide sequence ID" value="NM_138797.4"/>
</dbReference>
<dbReference type="SMR" id="Q6NXT1"/>
<dbReference type="BioGRID" id="126185">
    <property type="interactions" value="32"/>
</dbReference>
<dbReference type="FunCoup" id="Q6NXT1">
    <property type="interactions" value="2168"/>
</dbReference>
<dbReference type="IntAct" id="Q6NXT1">
    <property type="interactions" value="22"/>
</dbReference>
<dbReference type="STRING" id="9606.ENSP00000215941"/>
<dbReference type="GlyGen" id="Q6NXT1">
    <property type="glycosylation" value="1 site, 1 O-linked glycan (1 site)"/>
</dbReference>
<dbReference type="iPTMnet" id="Q6NXT1"/>
<dbReference type="PhosphoSitePlus" id="Q6NXT1"/>
<dbReference type="BioMuta" id="ANKRD54"/>
<dbReference type="DMDM" id="125987708"/>
<dbReference type="jPOST" id="Q6NXT1"/>
<dbReference type="MassIVE" id="Q6NXT1"/>
<dbReference type="PaxDb" id="9606-ENSP00000215941"/>
<dbReference type="PeptideAtlas" id="Q6NXT1"/>
<dbReference type="ProteomicsDB" id="66769">
    <molecule id="Q6NXT1-1"/>
</dbReference>
<dbReference type="ProteomicsDB" id="66770">
    <molecule id="Q6NXT1-2"/>
</dbReference>
<dbReference type="Pumba" id="Q6NXT1"/>
<dbReference type="Antibodypedia" id="26115">
    <property type="antibodies" value="121 antibodies from 27 providers"/>
</dbReference>
<dbReference type="DNASU" id="129138"/>
<dbReference type="Ensembl" id="ENST00000215941.9">
    <molecule id="Q6NXT1-1"/>
    <property type="protein sequence ID" value="ENSP00000215941.4"/>
    <property type="gene ID" value="ENSG00000100124.15"/>
</dbReference>
<dbReference type="GeneID" id="129138"/>
<dbReference type="KEGG" id="hsa:129138"/>
<dbReference type="MANE-Select" id="ENST00000215941.9">
    <property type="protein sequence ID" value="ENSP00000215941.4"/>
    <property type="RefSeq nucleotide sequence ID" value="NM_138797.4"/>
    <property type="RefSeq protein sequence ID" value="NP_620152.1"/>
</dbReference>
<dbReference type="UCSC" id="uc003auc.4">
    <molecule id="Q6NXT1-1"/>
    <property type="organism name" value="human"/>
</dbReference>
<dbReference type="AGR" id="HGNC:25185"/>
<dbReference type="CTD" id="129138"/>
<dbReference type="DisGeNET" id="129138"/>
<dbReference type="GeneCards" id="ANKRD54"/>
<dbReference type="HGNC" id="HGNC:25185">
    <property type="gene designation" value="ANKRD54"/>
</dbReference>
<dbReference type="HPA" id="ENSG00000100124">
    <property type="expression patterns" value="Low tissue specificity"/>
</dbReference>
<dbReference type="MIM" id="613383">
    <property type="type" value="gene"/>
</dbReference>
<dbReference type="neXtProt" id="NX_Q6NXT1"/>
<dbReference type="OpenTargets" id="ENSG00000100124"/>
<dbReference type="PharmGKB" id="PA145149843"/>
<dbReference type="VEuPathDB" id="HostDB:ENSG00000100124"/>
<dbReference type="eggNOG" id="KOG0504">
    <property type="taxonomic scope" value="Eukaryota"/>
</dbReference>
<dbReference type="GeneTree" id="ENSGT00940000157805"/>
<dbReference type="HOGENOM" id="CLU_072816_0_0_1"/>
<dbReference type="InParanoid" id="Q6NXT1"/>
<dbReference type="OMA" id="IQMRPSG"/>
<dbReference type="OrthoDB" id="496981at2759"/>
<dbReference type="PAN-GO" id="Q6NXT1">
    <property type="GO annotations" value="5 GO annotations based on evolutionary models"/>
</dbReference>
<dbReference type="PhylomeDB" id="Q6NXT1"/>
<dbReference type="TreeFam" id="TF330790"/>
<dbReference type="PathwayCommons" id="Q6NXT1"/>
<dbReference type="SignaLink" id="Q6NXT1"/>
<dbReference type="BioGRID-ORCS" id="129138">
    <property type="hits" value="37 hits in 1156 CRISPR screens"/>
</dbReference>
<dbReference type="CD-CODE" id="B5B9A610">
    <property type="entry name" value="PML body"/>
</dbReference>
<dbReference type="ChiTaRS" id="ANKRD54">
    <property type="organism name" value="human"/>
</dbReference>
<dbReference type="GenomeRNAi" id="129138"/>
<dbReference type="Pharos" id="Q6NXT1">
    <property type="development level" value="Tbio"/>
</dbReference>
<dbReference type="PRO" id="PR:Q6NXT1"/>
<dbReference type="Proteomes" id="UP000005640">
    <property type="component" value="Chromosome 22"/>
</dbReference>
<dbReference type="RNAct" id="Q6NXT1">
    <property type="molecule type" value="protein"/>
</dbReference>
<dbReference type="Bgee" id="ENSG00000100124">
    <property type="expression patterns" value="Expressed in right uterine tube and 173 other cell types or tissues"/>
</dbReference>
<dbReference type="ExpressionAtlas" id="Q6NXT1">
    <property type="expression patterns" value="baseline and differential"/>
</dbReference>
<dbReference type="GO" id="GO:0005737">
    <property type="term" value="C:cytoplasm"/>
    <property type="evidence" value="ECO:0000250"/>
    <property type="project" value="UniProtKB"/>
</dbReference>
<dbReference type="GO" id="GO:0030496">
    <property type="term" value="C:midbody"/>
    <property type="evidence" value="ECO:0000250"/>
    <property type="project" value="UniProtKB"/>
</dbReference>
<dbReference type="GO" id="GO:0005634">
    <property type="term" value="C:nucleus"/>
    <property type="evidence" value="ECO:0000250"/>
    <property type="project" value="UniProtKB"/>
</dbReference>
<dbReference type="GO" id="GO:0019887">
    <property type="term" value="F:protein kinase regulator activity"/>
    <property type="evidence" value="ECO:0000318"/>
    <property type="project" value="GO_Central"/>
</dbReference>
<dbReference type="GO" id="GO:0044877">
    <property type="term" value="F:protein-containing complex binding"/>
    <property type="evidence" value="ECO:0007669"/>
    <property type="project" value="Ensembl"/>
</dbReference>
<dbReference type="GO" id="GO:0006913">
    <property type="term" value="P:nucleocytoplasmic transport"/>
    <property type="evidence" value="ECO:0007669"/>
    <property type="project" value="Ensembl"/>
</dbReference>
<dbReference type="GO" id="GO:0045648">
    <property type="term" value="P:positive regulation of erythrocyte differentiation"/>
    <property type="evidence" value="ECO:0000250"/>
    <property type="project" value="UniProtKB"/>
</dbReference>
<dbReference type="GO" id="GO:1902531">
    <property type="term" value="P:regulation of intracellular signal transduction"/>
    <property type="evidence" value="ECO:0000250"/>
    <property type="project" value="UniProtKB"/>
</dbReference>
<dbReference type="FunFam" id="1.25.40.20:FF:000108">
    <property type="entry name" value="Ankyrin repeat domain-containing protein 54"/>
    <property type="match status" value="1"/>
</dbReference>
<dbReference type="FunFam" id="1.25.40.20:FF:000162">
    <property type="entry name" value="Ankyrin repeat domain-containing protein 54"/>
    <property type="match status" value="1"/>
</dbReference>
<dbReference type="Gene3D" id="1.25.40.20">
    <property type="entry name" value="Ankyrin repeat-containing domain"/>
    <property type="match status" value="2"/>
</dbReference>
<dbReference type="InterPro" id="IPR002110">
    <property type="entry name" value="Ankyrin_rpt"/>
</dbReference>
<dbReference type="InterPro" id="IPR036770">
    <property type="entry name" value="Ankyrin_rpt-contain_sf"/>
</dbReference>
<dbReference type="PANTHER" id="PTHR24197:SF44">
    <property type="entry name" value="ANKYRIN REPEAT DOMAIN-CONTAINING PROTEIN 54"/>
    <property type="match status" value="1"/>
</dbReference>
<dbReference type="PANTHER" id="PTHR24197">
    <property type="entry name" value="ANKYRIN REPEAT DOMAIN-CONTAINING PROTEIN 61"/>
    <property type="match status" value="1"/>
</dbReference>
<dbReference type="Pfam" id="PF00023">
    <property type="entry name" value="Ank"/>
    <property type="match status" value="1"/>
</dbReference>
<dbReference type="Pfam" id="PF12796">
    <property type="entry name" value="Ank_2"/>
    <property type="match status" value="1"/>
</dbReference>
<dbReference type="SMART" id="SM00248">
    <property type="entry name" value="ANK"/>
    <property type="match status" value="4"/>
</dbReference>
<dbReference type="SUPFAM" id="SSF48403">
    <property type="entry name" value="Ankyrin repeat"/>
    <property type="match status" value="1"/>
</dbReference>
<dbReference type="PROSITE" id="PS50297">
    <property type="entry name" value="ANK_REP_REGION"/>
    <property type="match status" value="1"/>
</dbReference>
<dbReference type="PROSITE" id="PS50088">
    <property type="entry name" value="ANK_REPEAT"/>
    <property type="match status" value="2"/>
</dbReference>
<keyword id="KW-0007">Acetylation</keyword>
<keyword id="KW-0025">Alternative splicing</keyword>
<keyword id="KW-0040">ANK repeat</keyword>
<keyword id="KW-0963">Cytoplasm</keyword>
<keyword id="KW-0539">Nucleus</keyword>
<keyword id="KW-0597">Phosphoprotein</keyword>
<keyword id="KW-1267">Proteomics identification</keyword>
<keyword id="KW-1185">Reference proteome</keyword>
<keyword id="KW-0677">Repeat</keyword>
<reference key="1">
    <citation type="journal article" date="2004" name="Genome Biol.">
        <title>A genome annotation-driven approach to cloning the human ORFeome.</title>
        <authorList>
            <person name="Collins J.E."/>
            <person name="Wright C.L."/>
            <person name="Edwards C.A."/>
            <person name="Davis M.P."/>
            <person name="Grinham J.A."/>
            <person name="Cole C.G."/>
            <person name="Goward M.E."/>
            <person name="Aguado B."/>
            <person name="Mallya M."/>
            <person name="Mokrab Y."/>
            <person name="Huckle E.J."/>
            <person name="Beare D.M."/>
            <person name="Dunham I."/>
        </authorList>
    </citation>
    <scope>NUCLEOTIDE SEQUENCE [LARGE SCALE MRNA] (ISOFORM 1)</scope>
</reference>
<reference key="2">
    <citation type="journal article" date="2004" name="Nat. Genet.">
        <title>Complete sequencing and characterization of 21,243 full-length human cDNAs.</title>
        <authorList>
            <person name="Ota T."/>
            <person name="Suzuki Y."/>
            <person name="Nishikawa T."/>
            <person name="Otsuki T."/>
            <person name="Sugiyama T."/>
            <person name="Irie R."/>
            <person name="Wakamatsu A."/>
            <person name="Hayashi K."/>
            <person name="Sato H."/>
            <person name="Nagai K."/>
            <person name="Kimura K."/>
            <person name="Makita H."/>
            <person name="Sekine M."/>
            <person name="Obayashi M."/>
            <person name="Nishi T."/>
            <person name="Shibahara T."/>
            <person name="Tanaka T."/>
            <person name="Ishii S."/>
            <person name="Yamamoto J."/>
            <person name="Saito K."/>
            <person name="Kawai Y."/>
            <person name="Isono Y."/>
            <person name="Nakamura Y."/>
            <person name="Nagahari K."/>
            <person name="Murakami K."/>
            <person name="Yasuda T."/>
            <person name="Iwayanagi T."/>
            <person name="Wagatsuma M."/>
            <person name="Shiratori A."/>
            <person name="Sudo H."/>
            <person name="Hosoiri T."/>
            <person name="Kaku Y."/>
            <person name="Kodaira H."/>
            <person name="Kondo H."/>
            <person name="Sugawara M."/>
            <person name="Takahashi M."/>
            <person name="Kanda K."/>
            <person name="Yokoi T."/>
            <person name="Furuya T."/>
            <person name="Kikkawa E."/>
            <person name="Omura Y."/>
            <person name="Abe K."/>
            <person name="Kamihara K."/>
            <person name="Katsuta N."/>
            <person name="Sato K."/>
            <person name="Tanikawa M."/>
            <person name="Yamazaki M."/>
            <person name="Ninomiya K."/>
            <person name="Ishibashi T."/>
            <person name="Yamashita H."/>
            <person name="Murakawa K."/>
            <person name="Fujimori K."/>
            <person name="Tanai H."/>
            <person name="Kimata M."/>
            <person name="Watanabe M."/>
            <person name="Hiraoka S."/>
            <person name="Chiba Y."/>
            <person name="Ishida S."/>
            <person name="Ono Y."/>
            <person name="Takiguchi S."/>
            <person name="Watanabe S."/>
            <person name="Yosida M."/>
            <person name="Hotuta T."/>
            <person name="Kusano J."/>
            <person name="Kanehori K."/>
            <person name="Takahashi-Fujii A."/>
            <person name="Hara H."/>
            <person name="Tanase T.-O."/>
            <person name="Nomura Y."/>
            <person name="Togiya S."/>
            <person name="Komai F."/>
            <person name="Hara R."/>
            <person name="Takeuchi K."/>
            <person name="Arita M."/>
            <person name="Imose N."/>
            <person name="Musashino K."/>
            <person name="Yuuki H."/>
            <person name="Oshima A."/>
            <person name="Sasaki N."/>
            <person name="Aotsuka S."/>
            <person name="Yoshikawa Y."/>
            <person name="Matsunawa H."/>
            <person name="Ichihara T."/>
            <person name="Shiohata N."/>
            <person name="Sano S."/>
            <person name="Moriya S."/>
            <person name="Momiyama H."/>
            <person name="Satoh N."/>
            <person name="Takami S."/>
            <person name="Terashima Y."/>
            <person name="Suzuki O."/>
            <person name="Nakagawa S."/>
            <person name="Senoh A."/>
            <person name="Mizoguchi H."/>
            <person name="Goto Y."/>
            <person name="Shimizu F."/>
            <person name="Wakebe H."/>
            <person name="Hishigaki H."/>
            <person name="Watanabe T."/>
            <person name="Sugiyama A."/>
            <person name="Takemoto M."/>
            <person name="Kawakami B."/>
            <person name="Yamazaki M."/>
            <person name="Watanabe K."/>
            <person name="Kumagai A."/>
            <person name="Itakura S."/>
            <person name="Fukuzumi Y."/>
            <person name="Fujimori Y."/>
            <person name="Komiyama M."/>
            <person name="Tashiro H."/>
            <person name="Tanigami A."/>
            <person name="Fujiwara T."/>
            <person name="Ono T."/>
            <person name="Yamada K."/>
            <person name="Fujii Y."/>
            <person name="Ozaki K."/>
            <person name="Hirao M."/>
            <person name="Ohmori Y."/>
            <person name="Kawabata A."/>
            <person name="Hikiji T."/>
            <person name="Kobatake N."/>
            <person name="Inagaki H."/>
            <person name="Ikema Y."/>
            <person name="Okamoto S."/>
            <person name="Okitani R."/>
            <person name="Kawakami T."/>
            <person name="Noguchi S."/>
            <person name="Itoh T."/>
            <person name="Shigeta K."/>
            <person name="Senba T."/>
            <person name="Matsumura K."/>
            <person name="Nakajima Y."/>
            <person name="Mizuno T."/>
            <person name="Morinaga M."/>
            <person name="Sasaki M."/>
            <person name="Togashi T."/>
            <person name="Oyama M."/>
            <person name="Hata H."/>
            <person name="Watanabe M."/>
            <person name="Komatsu T."/>
            <person name="Mizushima-Sugano J."/>
            <person name="Satoh T."/>
            <person name="Shirai Y."/>
            <person name="Takahashi Y."/>
            <person name="Nakagawa K."/>
            <person name="Okumura K."/>
            <person name="Nagase T."/>
            <person name="Nomura N."/>
            <person name="Kikuchi H."/>
            <person name="Masuho Y."/>
            <person name="Yamashita R."/>
            <person name="Nakai K."/>
            <person name="Yada T."/>
            <person name="Nakamura Y."/>
            <person name="Ohara O."/>
            <person name="Isogai T."/>
            <person name="Sugano S."/>
        </authorList>
    </citation>
    <scope>NUCLEOTIDE SEQUENCE [LARGE SCALE MRNA] (ISOFORM 2)</scope>
</reference>
<reference key="3">
    <citation type="journal article" date="1999" name="Nature">
        <title>The DNA sequence of human chromosome 22.</title>
        <authorList>
            <person name="Dunham I."/>
            <person name="Hunt A.R."/>
            <person name="Collins J.E."/>
            <person name="Bruskiewich R."/>
            <person name="Beare D.M."/>
            <person name="Clamp M."/>
            <person name="Smink L.J."/>
            <person name="Ainscough R."/>
            <person name="Almeida J.P."/>
            <person name="Babbage A.K."/>
            <person name="Bagguley C."/>
            <person name="Bailey J."/>
            <person name="Barlow K.F."/>
            <person name="Bates K.N."/>
            <person name="Beasley O.P."/>
            <person name="Bird C.P."/>
            <person name="Blakey S.E."/>
            <person name="Bridgeman A.M."/>
            <person name="Buck D."/>
            <person name="Burgess J."/>
            <person name="Burrill W.D."/>
            <person name="Burton J."/>
            <person name="Carder C."/>
            <person name="Carter N.P."/>
            <person name="Chen Y."/>
            <person name="Clark G."/>
            <person name="Clegg S.M."/>
            <person name="Cobley V.E."/>
            <person name="Cole C.G."/>
            <person name="Collier R.E."/>
            <person name="Connor R."/>
            <person name="Conroy D."/>
            <person name="Corby N.R."/>
            <person name="Coville G.J."/>
            <person name="Cox A.V."/>
            <person name="Davis J."/>
            <person name="Dawson E."/>
            <person name="Dhami P.D."/>
            <person name="Dockree C."/>
            <person name="Dodsworth S.J."/>
            <person name="Durbin R.M."/>
            <person name="Ellington A.G."/>
            <person name="Evans K.L."/>
            <person name="Fey J.M."/>
            <person name="Fleming K."/>
            <person name="French L."/>
            <person name="Garner A.A."/>
            <person name="Gilbert J.G.R."/>
            <person name="Goward M.E."/>
            <person name="Grafham D.V."/>
            <person name="Griffiths M.N.D."/>
            <person name="Hall C."/>
            <person name="Hall R.E."/>
            <person name="Hall-Tamlyn G."/>
            <person name="Heathcott R.W."/>
            <person name="Ho S."/>
            <person name="Holmes S."/>
            <person name="Hunt S.E."/>
            <person name="Jones M.C."/>
            <person name="Kershaw J."/>
            <person name="Kimberley A.M."/>
            <person name="King A."/>
            <person name="Laird G.K."/>
            <person name="Langford C.F."/>
            <person name="Leversha M.A."/>
            <person name="Lloyd C."/>
            <person name="Lloyd D.M."/>
            <person name="Martyn I.D."/>
            <person name="Mashreghi-Mohammadi M."/>
            <person name="Matthews L.H."/>
            <person name="Mccann O.T."/>
            <person name="Mcclay J."/>
            <person name="Mclaren S."/>
            <person name="McMurray A.A."/>
            <person name="Milne S.A."/>
            <person name="Mortimore B.J."/>
            <person name="Odell C.N."/>
            <person name="Pavitt R."/>
            <person name="Pearce A.V."/>
            <person name="Pearson D."/>
            <person name="Phillimore B.J.C.T."/>
            <person name="Phillips S.H."/>
            <person name="Plumb R.W."/>
            <person name="Ramsay H."/>
            <person name="Ramsey Y."/>
            <person name="Rogers L."/>
            <person name="Ross M.T."/>
            <person name="Scott C.E."/>
            <person name="Sehra H.K."/>
            <person name="Skuce C.D."/>
            <person name="Smalley S."/>
            <person name="Smith M.L."/>
            <person name="Soderlund C."/>
            <person name="Spragon L."/>
            <person name="Steward C.A."/>
            <person name="Sulston J.E."/>
            <person name="Swann R.M."/>
            <person name="Vaudin M."/>
            <person name="Wall M."/>
            <person name="Wallis J.M."/>
            <person name="Whiteley M.N."/>
            <person name="Willey D.L."/>
            <person name="Williams L."/>
            <person name="Williams S.A."/>
            <person name="Williamson H."/>
            <person name="Wilmer T.E."/>
            <person name="Wilming L."/>
            <person name="Wright C.L."/>
            <person name="Hubbard T."/>
            <person name="Bentley D.R."/>
            <person name="Beck S."/>
            <person name="Rogers J."/>
            <person name="Shimizu N."/>
            <person name="Minoshima S."/>
            <person name="Kawasaki K."/>
            <person name="Sasaki T."/>
            <person name="Asakawa S."/>
            <person name="Kudoh J."/>
            <person name="Shintani A."/>
            <person name="Shibuya K."/>
            <person name="Yoshizaki Y."/>
            <person name="Aoki N."/>
            <person name="Mitsuyama S."/>
            <person name="Roe B.A."/>
            <person name="Chen F."/>
            <person name="Chu L."/>
            <person name="Crabtree J."/>
            <person name="Deschamps S."/>
            <person name="Do A."/>
            <person name="Do T."/>
            <person name="Dorman A."/>
            <person name="Fang F."/>
            <person name="Fu Y."/>
            <person name="Hu P."/>
            <person name="Hua A."/>
            <person name="Kenton S."/>
            <person name="Lai H."/>
            <person name="Lao H.I."/>
            <person name="Lewis J."/>
            <person name="Lewis S."/>
            <person name="Lin S.-P."/>
            <person name="Loh P."/>
            <person name="Malaj E."/>
            <person name="Nguyen T."/>
            <person name="Pan H."/>
            <person name="Phan S."/>
            <person name="Qi S."/>
            <person name="Qian Y."/>
            <person name="Ray L."/>
            <person name="Ren Q."/>
            <person name="Shaull S."/>
            <person name="Sloan D."/>
            <person name="Song L."/>
            <person name="Wang Q."/>
            <person name="Wang Y."/>
            <person name="Wang Z."/>
            <person name="White J."/>
            <person name="Willingham D."/>
            <person name="Wu H."/>
            <person name="Yao Z."/>
            <person name="Zhan M."/>
            <person name="Zhang G."/>
            <person name="Chissoe S."/>
            <person name="Murray J."/>
            <person name="Miller N."/>
            <person name="Minx P."/>
            <person name="Fulton R."/>
            <person name="Johnson D."/>
            <person name="Bemis G."/>
            <person name="Bentley D."/>
            <person name="Bradshaw H."/>
            <person name="Bourne S."/>
            <person name="Cordes M."/>
            <person name="Du Z."/>
            <person name="Fulton L."/>
            <person name="Goela D."/>
            <person name="Graves T."/>
            <person name="Hawkins J."/>
            <person name="Hinds K."/>
            <person name="Kemp K."/>
            <person name="Latreille P."/>
            <person name="Layman D."/>
            <person name="Ozersky P."/>
            <person name="Rohlfing T."/>
            <person name="Scheet P."/>
            <person name="Walker C."/>
            <person name="Wamsley A."/>
            <person name="Wohldmann P."/>
            <person name="Pepin K."/>
            <person name="Nelson J."/>
            <person name="Korf I."/>
            <person name="Bedell J.A."/>
            <person name="Hillier L.W."/>
            <person name="Mardis E."/>
            <person name="Waterston R."/>
            <person name="Wilson R."/>
            <person name="Emanuel B.S."/>
            <person name="Shaikh T."/>
            <person name="Kurahashi H."/>
            <person name="Saitta S."/>
            <person name="Budarf M.L."/>
            <person name="McDermid H.E."/>
            <person name="Johnson A."/>
            <person name="Wong A.C.C."/>
            <person name="Morrow B.E."/>
            <person name="Edelmann L."/>
            <person name="Kim U.J."/>
            <person name="Shizuya H."/>
            <person name="Simon M.I."/>
            <person name="Dumanski J.P."/>
            <person name="Peyrard M."/>
            <person name="Kedra D."/>
            <person name="Seroussi E."/>
            <person name="Fransson I."/>
            <person name="Tapia I."/>
            <person name="Bruder C.E."/>
            <person name="O'Brien K.P."/>
            <person name="Wilkinson P."/>
            <person name="Bodenteich A."/>
            <person name="Hartman K."/>
            <person name="Hu X."/>
            <person name="Khan A.S."/>
            <person name="Lane L."/>
            <person name="Tilahun Y."/>
            <person name="Wright H."/>
        </authorList>
    </citation>
    <scope>NUCLEOTIDE SEQUENCE [LARGE SCALE GENOMIC DNA]</scope>
</reference>
<reference key="4">
    <citation type="journal article" date="2004" name="Genome Res.">
        <title>The status, quality, and expansion of the NIH full-length cDNA project: the Mammalian Gene Collection (MGC).</title>
        <authorList>
            <consortium name="The MGC Project Team"/>
        </authorList>
    </citation>
    <scope>NUCLEOTIDE SEQUENCE [LARGE SCALE MRNA] (ISOFORM 1)</scope>
    <source>
        <tissue>Brain</tissue>
    </source>
</reference>
<reference key="5">
    <citation type="journal article" date="2008" name="Mol. Cell">
        <title>Kinase-selective enrichment enables quantitative phosphoproteomics of the kinome across the cell cycle.</title>
        <authorList>
            <person name="Daub H."/>
            <person name="Olsen J.V."/>
            <person name="Bairlein M."/>
            <person name="Gnad F."/>
            <person name="Oppermann F.S."/>
            <person name="Korner R."/>
            <person name="Greff Z."/>
            <person name="Keri G."/>
            <person name="Stemmann O."/>
            <person name="Mann M."/>
        </authorList>
    </citation>
    <scope>PHOSPHORYLATION [LARGE SCALE ANALYSIS] AT SER-63</scope>
    <scope>IDENTIFICATION BY MASS SPECTROMETRY [LARGE SCALE ANALYSIS]</scope>
    <source>
        <tissue>Cervix carcinoma</tissue>
    </source>
</reference>
<reference key="6">
    <citation type="journal article" date="2009" name="Anal. Chem.">
        <title>Lys-N and trypsin cover complementary parts of the phosphoproteome in a refined SCX-based approach.</title>
        <authorList>
            <person name="Gauci S."/>
            <person name="Helbig A.O."/>
            <person name="Slijper M."/>
            <person name="Krijgsveld J."/>
            <person name="Heck A.J."/>
            <person name="Mohammed S."/>
        </authorList>
    </citation>
    <scope>ACETYLATION [LARGE SCALE ANALYSIS] AT ALA-2</scope>
    <scope>CLEAVAGE OF INITIATOR METHIONINE [LARGE SCALE ANALYSIS]</scope>
    <scope>IDENTIFICATION BY MASS SPECTROMETRY [LARGE SCALE ANALYSIS]</scope>
</reference>
<reference key="7">
    <citation type="journal article" date="2009" name="Mol. Cell. Proteomics">
        <title>Large-scale proteomics analysis of the human kinome.</title>
        <authorList>
            <person name="Oppermann F.S."/>
            <person name="Gnad F."/>
            <person name="Olsen J.V."/>
            <person name="Hornberger R."/>
            <person name="Greff Z."/>
            <person name="Keri G."/>
            <person name="Mann M."/>
            <person name="Daub H."/>
        </authorList>
    </citation>
    <scope>PHOSPHORYLATION [LARGE SCALE ANALYSIS] AT SER-63</scope>
    <scope>IDENTIFICATION BY MASS SPECTROMETRY [LARGE SCALE ANALYSIS]</scope>
</reference>
<reference key="8">
    <citation type="journal article" date="2010" name="Sci. Signal.">
        <title>Quantitative phosphoproteomics reveals widespread full phosphorylation site occupancy during mitosis.</title>
        <authorList>
            <person name="Olsen J.V."/>
            <person name="Vermeulen M."/>
            <person name="Santamaria A."/>
            <person name="Kumar C."/>
            <person name="Miller M.L."/>
            <person name="Jensen L.J."/>
            <person name="Gnad F."/>
            <person name="Cox J."/>
            <person name="Jensen T.S."/>
            <person name="Nigg E.A."/>
            <person name="Brunak S."/>
            <person name="Mann M."/>
        </authorList>
    </citation>
    <scope>PHOSPHORYLATION [LARGE SCALE ANALYSIS] AT SER-58 AND SER-63</scope>
    <scope>IDENTIFICATION BY MASS SPECTROMETRY [LARGE SCALE ANALYSIS]</scope>
    <source>
        <tissue>Cervix carcinoma</tissue>
    </source>
</reference>
<reference key="9">
    <citation type="journal article" date="2011" name="Sci. Signal.">
        <title>System-wide temporal characterization of the proteome and phosphoproteome of human embryonic stem cell differentiation.</title>
        <authorList>
            <person name="Rigbolt K.T."/>
            <person name="Prokhorova T.A."/>
            <person name="Akimov V."/>
            <person name="Henningsen J."/>
            <person name="Johansen P.T."/>
            <person name="Kratchmarova I."/>
            <person name="Kassem M."/>
            <person name="Mann M."/>
            <person name="Olsen J.V."/>
            <person name="Blagoev B."/>
        </authorList>
    </citation>
    <scope>PHOSPHORYLATION [LARGE SCALE ANALYSIS] AT SER-63</scope>
    <scope>IDENTIFICATION BY MASS SPECTROMETRY [LARGE SCALE ANALYSIS]</scope>
</reference>
<reference key="10">
    <citation type="journal article" date="2014" name="J. Proteomics">
        <title>An enzyme assisted RP-RPLC approach for in-depth analysis of human liver phosphoproteome.</title>
        <authorList>
            <person name="Bian Y."/>
            <person name="Song C."/>
            <person name="Cheng K."/>
            <person name="Dong M."/>
            <person name="Wang F."/>
            <person name="Huang J."/>
            <person name="Sun D."/>
            <person name="Wang L."/>
            <person name="Ye M."/>
            <person name="Zou H."/>
        </authorList>
    </citation>
    <scope>PHOSPHORYLATION [LARGE SCALE ANALYSIS] AT SER-63</scope>
    <scope>IDENTIFICATION BY MASS SPECTROMETRY [LARGE SCALE ANALYSIS]</scope>
    <source>
        <tissue>Liver</tissue>
    </source>
</reference>
<proteinExistence type="evidence at protein level"/>
<gene>
    <name type="primary">ANKRD54</name>
    <name type="synonym">LIAR</name>
</gene>
<organism>
    <name type="scientific">Homo sapiens</name>
    <name type="common">Human</name>
    <dbReference type="NCBI Taxonomy" id="9606"/>
    <lineage>
        <taxon>Eukaryota</taxon>
        <taxon>Metazoa</taxon>
        <taxon>Chordata</taxon>
        <taxon>Craniata</taxon>
        <taxon>Vertebrata</taxon>
        <taxon>Euteleostomi</taxon>
        <taxon>Mammalia</taxon>
        <taxon>Eutheria</taxon>
        <taxon>Euarchontoglires</taxon>
        <taxon>Primates</taxon>
        <taxon>Haplorrhini</taxon>
        <taxon>Catarrhini</taxon>
        <taxon>Hominidae</taxon>
        <taxon>Homo</taxon>
    </lineage>
</organism>
<comment type="function">
    <text evidence="1">Plays an important role in regulating intracellular signaling events associated with erythroid terminal differentiation.</text>
</comment>
<comment type="subunit">
    <text evidence="1">Interacts (via ankyrin repeat region) with LYN (via SH3-domain) in an activation-independent status of LYN. Forms a multiprotein complex with LYN and HCLS1. Interacts with TSN2, VAV1, DBNL and LASP1.</text>
</comment>
<comment type="interaction">
    <interactant intactId="EBI-10102770">
        <id>Q6NXT1</id>
    </interactant>
    <interactant intactId="EBI-5357290">
        <id>O75386</id>
        <label>TULP3</label>
    </interactant>
    <organismsDiffer>false</organismsDiffer>
    <experiments>10</experiments>
</comment>
<comment type="subcellular location">
    <subcellularLocation>
        <location evidence="1">Nucleus</location>
    </subcellularLocation>
    <subcellularLocation>
        <location evidence="1">Cytoplasm</location>
    </subcellularLocation>
    <subcellularLocation>
        <location evidence="1">Midbody</location>
    </subcellularLocation>
    <text evidence="1">Shuttles between nucleus and cytoplasm during the cell cycle. EPO stimulation induces nuclear accumulation (By similarity).</text>
</comment>
<comment type="alternative products">
    <event type="alternative splicing"/>
    <isoform>
        <id>Q6NXT1-1</id>
        <name>1</name>
        <sequence type="displayed"/>
    </isoform>
    <isoform>
        <id>Q6NXT1-2</id>
        <name>2</name>
        <sequence type="described" ref="VSP_022770 VSP_022771"/>
    </isoform>
</comment>
<feature type="initiator methionine" description="Removed" evidence="7">
    <location>
        <position position="1"/>
    </location>
</feature>
<feature type="chain" id="PRO_0000274493" description="Ankyrin repeat domain-containing protein 54">
    <location>
        <begin position="2"/>
        <end position="300"/>
    </location>
</feature>
<feature type="repeat" description="ANK 1">
    <location>
        <begin position="109"/>
        <end position="138"/>
    </location>
</feature>
<feature type="repeat" description="ANK 2">
    <location>
        <begin position="142"/>
        <end position="171"/>
    </location>
</feature>
<feature type="repeat" description="ANK 3">
    <location>
        <begin position="175"/>
        <end position="204"/>
    </location>
</feature>
<feature type="repeat" description="ANK 4">
    <location>
        <begin position="208"/>
        <end position="244"/>
    </location>
</feature>
<feature type="region of interest" description="Disordered" evidence="2">
    <location>
        <begin position="1"/>
        <end position="27"/>
    </location>
</feature>
<feature type="region of interest" description="LYN-binding" evidence="1">
    <location>
        <begin position="141"/>
        <end position="241"/>
    </location>
</feature>
<feature type="short sequence motif" description="Nuclear localization signal (NLS)" evidence="1">
    <location>
        <begin position="99"/>
        <end position="117"/>
    </location>
</feature>
<feature type="short sequence motif" description="Nuclear export signal (NES)" evidence="1">
    <location>
        <begin position="283"/>
        <end position="293"/>
    </location>
</feature>
<feature type="modified residue" description="N-acetylalanine" evidence="7">
    <location>
        <position position="2"/>
    </location>
</feature>
<feature type="modified residue" description="Phosphoserine" evidence="8">
    <location>
        <position position="58"/>
    </location>
</feature>
<feature type="modified residue" description="Phosphoserine" evidence="5 6 8 9 10">
    <location>
        <position position="63"/>
    </location>
</feature>
<feature type="splice variant" id="VSP_022770" description="In isoform 2." evidence="3">
    <location>
        <begin position="1"/>
        <end position="139"/>
    </location>
</feature>
<feature type="splice variant" id="VSP_022771" description="In isoform 2." evidence="3">
    <original>DDKGRTALHFASCNGNDQIVQLLLDHGADPNQRDGLGNTPLHLAACTNHVPVITTLLRG</original>
    <variation>MVLILTSEMGWGTRHCTWRPAPTTFLSSPHCYEEVCGFFPSLSSFSPSPPECSPQLVPA</variation>
    <location>
        <begin position="140"/>
        <end position="198"/>
    </location>
</feature>
<feature type="sequence conflict" description="In Ref. 4; AAH66909." evidence="4" ref="4">
    <original>R</original>
    <variation>W</variation>
    <location>
        <position position="99"/>
    </location>
</feature>
<protein>
    <recommendedName>
        <fullName>Ankyrin repeat domain-containing protein 54</fullName>
    </recommendedName>
    <alternativeName>
        <fullName>Lyn-interacting ankyrin repeat protein</fullName>
    </alternativeName>
</protein>
<sequence>MAAAAGDADDEPRSGHSSSEGECAVAPEPLTDAEGLFSFADFGSALGGGGAGLSGRASGGAQSPLRYLHVLWQQDAEPRDELRCKIPAGRLRRAARPHRRLGPTGKEVHALKRLRDSANANDVETVQQLLEDGADPCAADDKGRTALHFASCNGNDQIVQLLLDHGADPNQRDGLGNTPLHLAACTNHVPVITTLLRGGARVDALDRAGRTPLHLAKSKLNILQEGHAQCLEAVRLEVKQIIHMLREYLERLGQHEQRERLDDLCTRLQMTSTKEQVDEVTDLLASFTSLSLQMQSMEKR</sequence>
<accession>Q6NXT1</accession>
<accession>Q6ZSB1</accession>
<accession>Q9UGV1</accession>
<name>ANR54_HUMAN</name>
<evidence type="ECO:0000250" key="1"/>
<evidence type="ECO:0000256" key="2">
    <source>
        <dbReference type="SAM" id="MobiDB-lite"/>
    </source>
</evidence>
<evidence type="ECO:0000303" key="3">
    <source>
    </source>
</evidence>
<evidence type="ECO:0000305" key="4"/>
<evidence type="ECO:0007744" key="5">
    <source>
    </source>
</evidence>
<evidence type="ECO:0007744" key="6">
    <source>
    </source>
</evidence>
<evidence type="ECO:0007744" key="7">
    <source>
    </source>
</evidence>
<evidence type="ECO:0007744" key="8">
    <source>
    </source>
</evidence>
<evidence type="ECO:0007744" key="9">
    <source>
    </source>
</evidence>
<evidence type="ECO:0007744" key="10">
    <source>
    </source>
</evidence>